<feature type="chain" id="PRO_0000317587" description="Mitochondrial S-adenosylmethionine carrier protein">
    <location>
        <begin position="1"/>
        <end position="274"/>
    </location>
</feature>
<feature type="transmembrane region" description="Helical; Name=1" evidence="1">
    <location>
        <begin position="5"/>
        <end position="25"/>
    </location>
</feature>
<feature type="transmembrane region" description="Helical; Name=2" evidence="1">
    <location>
        <begin position="49"/>
        <end position="69"/>
    </location>
</feature>
<feature type="transmembrane region" description="Helical; Name=3" evidence="1">
    <location>
        <begin position="85"/>
        <end position="105"/>
    </location>
</feature>
<feature type="transmembrane region" description="Helical; Name=4" evidence="1">
    <location>
        <begin position="142"/>
        <end position="162"/>
    </location>
</feature>
<feature type="transmembrane region" description="Helical; Name=5" evidence="1">
    <location>
        <begin position="182"/>
        <end position="202"/>
    </location>
</feature>
<feature type="transmembrane region" description="Helical; Name=6" evidence="1">
    <location>
        <begin position="238"/>
        <end position="258"/>
    </location>
</feature>
<feature type="repeat" description="Solcar 1">
    <location>
        <begin position="4"/>
        <end position="77"/>
    </location>
</feature>
<feature type="repeat" description="Solcar 2">
    <location>
        <begin position="86"/>
        <end position="168"/>
    </location>
</feature>
<feature type="repeat" description="Solcar 3">
    <location>
        <begin position="177"/>
        <end position="265"/>
    </location>
</feature>
<feature type="splice variant" id="VSP_031062" description="In isoform 2 and isoform 3." evidence="8 9">
    <location>
        <begin position="1"/>
        <end position="88"/>
    </location>
</feature>
<feature type="splice variant" id="VSP_031063" description="In isoform 3." evidence="9">
    <original>IPF</original>
    <variation>EED</variation>
    <location>
        <begin position="152"/>
        <end position="154"/>
    </location>
</feature>
<feature type="splice variant" id="VSP_031064" description="In isoform 3." evidence="9">
    <location>
        <begin position="155"/>
        <end position="274"/>
    </location>
</feature>
<feature type="sequence variant" id="VAR_080244" description="In dbSNP:rs146159281." evidence="2 3 6">
    <original>S</original>
    <variation>N</variation>
    <location>
        <position position="41"/>
    </location>
</feature>
<feature type="sequence variant" id="VAR_076305" description="In COXPD28; loss of S-adenosyl-L-methionine/S-adenosyl-L-homocysteine antiporter activity; dbSNP:rs869025314." evidence="4">
    <original>A</original>
    <variation>V</variation>
    <location>
        <position position="102"/>
    </location>
</feature>
<feature type="sequence variant" id="VAR_087910" description="In COXPD28; uncertain significance; decreased S-adenosyl-L-methionine/S-adenosyl-L-homocysteine antiporter activity." evidence="5">
    <original>E</original>
    <variation>G</variation>
    <location>
        <position position="135"/>
    </location>
</feature>
<feature type="sequence variant" id="VAR_087911" description="In COXPD28; uncertain significance; decreased protein abundance; decreased S-adenosyl-L-methionine/S-adenosyl-L-homocysteine antiporter activity." evidence="5">
    <original>R</original>
    <variation>Q</variation>
    <location>
        <position position="142"/>
    </location>
</feature>
<feature type="sequence variant" id="VAR_076306" description="In COXPD28; decreased S-adenosyl-L-methionine/S-adenosyl-L-homocysteine antiporter activity; dbSNP:rs869025313." evidence="4">
    <original>V</original>
    <variation>G</variation>
    <location>
        <position position="148"/>
    </location>
</feature>
<feature type="sequence variant" id="VAR_076307" description="In COXPD28; loss of S-adenosyl-L-methionine/S-adenosyl-L-homocysteine antiporter activity; dbSNP:rs869025315." evidence="4">
    <original>P</original>
    <variation>L</variation>
    <location>
        <position position="199"/>
    </location>
</feature>
<feature type="sequence variant" id="VAR_058973" description="In dbSNP:rs13874." evidence="3 6">
    <original>T</original>
    <variation>M</variation>
    <location>
        <position position="208"/>
    </location>
</feature>
<feature type="sequence conflict" description="In Ref. 2; BAF84562." evidence="10" ref="2">
    <original>T</original>
    <variation>A</variation>
    <location>
        <position position="208"/>
    </location>
</feature>
<protein>
    <recommendedName>
        <fullName evidence="7">Mitochondrial S-adenosylmethionine carrier protein</fullName>
        <shortName evidence="7">SAM carrier</shortName>
    </recommendedName>
    <alternativeName>
        <fullName evidence="13">Solute carrier family 25 member 26</fullName>
    </alternativeName>
</protein>
<reference key="1">
    <citation type="journal article" date="2004" name="Biochem. J.">
        <title>Identification of the human mitochondrial S-adenosylmethionine transporter: bacterial expression, reconstitution, functional characterization and tissue distribution.</title>
        <authorList>
            <person name="Agrimi G."/>
            <person name="Di Noia M.A."/>
            <person name="Marobbio C.M.T."/>
            <person name="Fiermonte G."/>
            <person name="Lasorsa F.M."/>
            <person name="Palmieri F."/>
        </authorList>
    </citation>
    <scope>NUCLEOTIDE SEQUENCE [MRNA] (ISOFORM 1)</scope>
    <scope>FUNCTION</scope>
    <scope>TRANSPORTER ACTIVITY</scope>
    <scope>BIOPHYSICOCHEMICAL PROPERTIES</scope>
    <scope>ACTIVITY REGULATION</scope>
    <scope>SUBCELLULAR LOCATION</scope>
    <scope>TISSUE SPECIFICITY</scope>
    <scope>VARIANT ASN-41</scope>
</reference>
<reference key="2">
    <citation type="journal article" date="2004" name="Nat. Genet.">
        <title>Complete sequencing and characterization of 21,243 full-length human cDNAs.</title>
        <authorList>
            <person name="Ota T."/>
            <person name="Suzuki Y."/>
            <person name="Nishikawa T."/>
            <person name="Otsuki T."/>
            <person name="Sugiyama T."/>
            <person name="Irie R."/>
            <person name="Wakamatsu A."/>
            <person name="Hayashi K."/>
            <person name="Sato H."/>
            <person name="Nagai K."/>
            <person name="Kimura K."/>
            <person name="Makita H."/>
            <person name="Sekine M."/>
            <person name="Obayashi M."/>
            <person name="Nishi T."/>
            <person name="Shibahara T."/>
            <person name="Tanaka T."/>
            <person name="Ishii S."/>
            <person name="Yamamoto J."/>
            <person name="Saito K."/>
            <person name="Kawai Y."/>
            <person name="Isono Y."/>
            <person name="Nakamura Y."/>
            <person name="Nagahari K."/>
            <person name="Murakami K."/>
            <person name="Yasuda T."/>
            <person name="Iwayanagi T."/>
            <person name="Wagatsuma M."/>
            <person name="Shiratori A."/>
            <person name="Sudo H."/>
            <person name="Hosoiri T."/>
            <person name="Kaku Y."/>
            <person name="Kodaira H."/>
            <person name="Kondo H."/>
            <person name="Sugawara M."/>
            <person name="Takahashi M."/>
            <person name="Kanda K."/>
            <person name="Yokoi T."/>
            <person name="Furuya T."/>
            <person name="Kikkawa E."/>
            <person name="Omura Y."/>
            <person name="Abe K."/>
            <person name="Kamihara K."/>
            <person name="Katsuta N."/>
            <person name="Sato K."/>
            <person name="Tanikawa M."/>
            <person name="Yamazaki M."/>
            <person name="Ninomiya K."/>
            <person name="Ishibashi T."/>
            <person name="Yamashita H."/>
            <person name="Murakawa K."/>
            <person name="Fujimori K."/>
            <person name="Tanai H."/>
            <person name="Kimata M."/>
            <person name="Watanabe M."/>
            <person name="Hiraoka S."/>
            <person name="Chiba Y."/>
            <person name="Ishida S."/>
            <person name="Ono Y."/>
            <person name="Takiguchi S."/>
            <person name="Watanabe S."/>
            <person name="Yosida M."/>
            <person name="Hotuta T."/>
            <person name="Kusano J."/>
            <person name="Kanehori K."/>
            <person name="Takahashi-Fujii A."/>
            <person name="Hara H."/>
            <person name="Tanase T.-O."/>
            <person name="Nomura Y."/>
            <person name="Togiya S."/>
            <person name="Komai F."/>
            <person name="Hara R."/>
            <person name="Takeuchi K."/>
            <person name="Arita M."/>
            <person name="Imose N."/>
            <person name="Musashino K."/>
            <person name="Yuuki H."/>
            <person name="Oshima A."/>
            <person name="Sasaki N."/>
            <person name="Aotsuka S."/>
            <person name="Yoshikawa Y."/>
            <person name="Matsunawa H."/>
            <person name="Ichihara T."/>
            <person name="Shiohata N."/>
            <person name="Sano S."/>
            <person name="Moriya S."/>
            <person name="Momiyama H."/>
            <person name="Satoh N."/>
            <person name="Takami S."/>
            <person name="Terashima Y."/>
            <person name="Suzuki O."/>
            <person name="Nakagawa S."/>
            <person name="Senoh A."/>
            <person name="Mizoguchi H."/>
            <person name="Goto Y."/>
            <person name="Shimizu F."/>
            <person name="Wakebe H."/>
            <person name="Hishigaki H."/>
            <person name="Watanabe T."/>
            <person name="Sugiyama A."/>
            <person name="Takemoto M."/>
            <person name="Kawakami B."/>
            <person name="Yamazaki M."/>
            <person name="Watanabe K."/>
            <person name="Kumagai A."/>
            <person name="Itakura S."/>
            <person name="Fukuzumi Y."/>
            <person name="Fujimori Y."/>
            <person name="Komiyama M."/>
            <person name="Tashiro H."/>
            <person name="Tanigami A."/>
            <person name="Fujiwara T."/>
            <person name="Ono T."/>
            <person name="Yamada K."/>
            <person name="Fujii Y."/>
            <person name="Ozaki K."/>
            <person name="Hirao M."/>
            <person name="Ohmori Y."/>
            <person name="Kawabata A."/>
            <person name="Hikiji T."/>
            <person name="Kobatake N."/>
            <person name="Inagaki H."/>
            <person name="Ikema Y."/>
            <person name="Okamoto S."/>
            <person name="Okitani R."/>
            <person name="Kawakami T."/>
            <person name="Noguchi S."/>
            <person name="Itoh T."/>
            <person name="Shigeta K."/>
            <person name="Senba T."/>
            <person name="Matsumura K."/>
            <person name="Nakajima Y."/>
            <person name="Mizuno T."/>
            <person name="Morinaga M."/>
            <person name="Sasaki M."/>
            <person name="Togashi T."/>
            <person name="Oyama M."/>
            <person name="Hata H."/>
            <person name="Watanabe M."/>
            <person name="Komatsu T."/>
            <person name="Mizushima-Sugano J."/>
            <person name="Satoh T."/>
            <person name="Shirai Y."/>
            <person name="Takahashi Y."/>
            <person name="Nakagawa K."/>
            <person name="Okumura K."/>
            <person name="Nagase T."/>
            <person name="Nomura N."/>
            <person name="Kikuchi H."/>
            <person name="Masuho Y."/>
            <person name="Yamashita R."/>
            <person name="Nakai K."/>
            <person name="Yada T."/>
            <person name="Nakamura Y."/>
            <person name="Ohara O."/>
            <person name="Isogai T."/>
            <person name="Sugano S."/>
        </authorList>
    </citation>
    <scope>NUCLEOTIDE SEQUENCE [LARGE SCALE MRNA] (ISOFORMS 1 AND 2)</scope>
    <scope>VARIANTS ASN-41 AND MET-208</scope>
    <source>
        <tissue>Placenta</tissue>
        <tissue>Skeletal muscle</tissue>
    </source>
</reference>
<reference key="3">
    <citation type="submission" date="2005-07" db="EMBL/GenBank/DDBJ databases">
        <authorList>
            <person name="Mural R.J."/>
            <person name="Istrail S."/>
            <person name="Sutton G.G."/>
            <person name="Florea L."/>
            <person name="Halpern A.L."/>
            <person name="Mobarry C.M."/>
            <person name="Lippert R."/>
            <person name="Walenz B."/>
            <person name="Shatkay H."/>
            <person name="Dew I."/>
            <person name="Miller J.R."/>
            <person name="Flanigan M.J."/>
            <person name="Edwards N.J."/>
            <person name="Bolanos R."/>
            <person name="Fasulo D."/>
            <person name="Halldorsson B.V."/>
            <person name="Hannenhalli S."/>
            <person name="Turner R."/>
            <person name="Yooseph S."/>
            <person name="Lu F."/>
            <person name="Nusskern D.R."/>
            <person name="Shue B.C."/>
            <person name="Zheng X.H."/>
            <person name="Zhong F."/>
            <person name="Delcher A.L."/>
            <person name="Huson D.H."/>
            <person name="Kravitz S.A."/>
            <person name="Mouchard L."/>
            <person name="Reinert K."/>
            <person name="Remington K.A."/>
            <person name="Clark A.G."/>
            <person name="Waterman M.S."/>
            <person name="Eichler E.E."/>
            <person name="Adams M.D."/>
            <person name="Hunkapiller M.W."/>
            <person name="Myers E.W."/>
            <person name="Venter J.C."/>
        </authorList>
    </citation>
    <scope>NUCLEOTIDE SEQUENCE [LARGE SCALE GENOMIC DNA]</scope>
    <scope>VARIANTS ASN-41 AND MET-208</scope>
</reference>
<reference key="4">
    <citation type="journal article" date="2006" name="Nature">
        <title>The DNA sequence, annotation and analysis of human chromosome 3.</title>
        <authorList>
            <person name="Muzny D.M."/>
            <person name="Scherer S.E."/>
            <person name="Kaul R."/>
            <person name="Wang J."/>
            <person name="Yu J."/>
            <person name="Sudbrak R."/>
            <person name="Buhay C.J."/>
            <person name="Chen R."/>
            <person name="Cree A."/>
            <person name="Ding Y."/>
            <person name="Dugan-Rocha S."/>
            <person name="Gill R."/>
            <person name="Gunaratne P."/>
            <person name="Harris R.A."/>
            <person name="Hawes A.C."/>
            <person name="Hernandez J."/>
            <person name="Hodgson A.V."/>
            <person name="Hume J."/>
            <person name="Jackson A."/>
            <person name="Khan Z.M."/>
            <person name="Kovar-Smith C."/>
            <person name="Lewis L.R."/>
            <person name="Lozado R.J."/>
            <person name="Metzker M.L."/>
            <person name="Milosavljevic A."/>
            <person name="Miner G.R."/>
            <person name="Morgan M.B."/>
            <person name="Nazareth L.V."/>
            <person name="Scott G."/>
            <person name="Sodergren E."/>
            <person name="Song X.-Z."/>
            <person name="Steffen D."/>
            <person name="Wei S."/>
            <person name="Wheeler D.A."/>
            <person name="Wright M.W."/>
            <person name="Worley K.C."/>
            <person name="Yuan Y."/>
            <person name="Zhang Z."/>
            <person name="Adams C.Q."/>
            <person name="Ansari-Lari M.A."/>
            <person name="Ayele M."/>
            <person name="Brown M.J."/>
            <person name="Chen G."/>
            <person name="Chen Z."/>
            <person name="Clendenning J."/>
            <person name="Clerc-Blankenburg K.P."/>
            <person name="Chen R."/>
            <person name="Chen Z."/>
            <person name="Davis C."/>
            <person name="Delgado O."/>
            <person name="Dinh H.H."/>
            <person name="Dong W."/>
            <person name="Draper H."/>
            <person name="Ernst S."/>
            <person name="Fu G."/>
            <person name="Gonzalez-Garay M.L."/>
            <person name="Garcia D.K."/>
            <person name="Gillett W."/>
            <person name="Gu J."/>
            <person name="Hao B."/>
            <person name="Haugen E."/>
            <person name="Havlak P."/>
            <person name="He X."/>
            <person name="Hennig S."/>
            <person name="Hu S."/>
            <person name="Huang W."/>
            <person name="Jackson L.R."/>
            <person name="Jacob L.S."/>
            <person name="Kelly S.H."/>
            <person name="Kube M."/>
            <person name="Levy R."/>
            <person name="Li Z."/>
            <person name="Liu B."/>
            <person name="Liu J."/>
            <person name="Liu W."/>
            <person name="Lu J."/>
            <person name="Maheshwari M."/>
            <person name="Nguyen B.-V."/>
            <person name="Okwuonu G.O."/>
            <person name="Palmeiri A."/>
            <person name="Pasternak S."/>
            <person name="Perez L.M."/>
            <person name="Phelps K.A."/>
            <person name="Plopper F.J."/>
            <person name="Qiang B."/>
            <person name="Raymond C."/>
            <person name="Rodriguez R."/>
            <person name="Saenphimmachak C."/>
            <person name="Santibanez J."/>
            <person name="Shen H."/>
            <person name="Shen Y."/>
            <person name="Subramanian S."/>
            <person name="Tabor P.E."/>
            <person name="Verduzco D."/>
            <person name="Waldron L."/>
            <person name="Wang J."/>
            <person name="Wang J."/>
            <person name="Wang Q."/>
            <person name="Williams G.A."/>
            <person name="Wong G.K.-S."/>
            <person name="Yao Z."/>
            <person name="Zhang J."/>
            <person name="Zhang X."/>
            <person name="Zhao G."/>
            <person name="Zhou J."/>
            <person name="Zhou Y."/>
            <person name="Nelson D."/>
            <person name="Lehrach H."/>
            <person name="Reinhardt R."/>
            <person name="Naylor S.L."/>
            <person name="Yang H."/>
            <person name="Olson M."/>
            <person name="Weinstock G."/>
            <person name="Gibbs R.A."/>
        </authorList>
    </citation>
    <scope>NUCLEOTIDE SEQUENCE [LARGE SCALE GENOMIC DNA]</scope>
</reference>
<reference key="5">
    <citation type="journal article" date="2004" name="Genome Res.">
        <title>The status, quality, and expansion of the NIH full-length cDNA project: the Mammalian Gene Collection (MGC).</title>
        <authorList>
            <consortium name="The MGC Project Team"/>
        </authorList>
    </citation>
    <scope>NUCLEOTIDE SEQUENCE [LARGE SCALE MRNA] (ISOFORMS 2 AND 3)</scope>
    <source>
        <tissue>Ovary</tissue>
        <tissue>Placenta</tissue>
    </source>
</reference>
<reference key="6">
    <citation type="journal article" date="2015" name="Am. J. Hum. Genet.">
        <title>Intra-mitochondrial methylation deficiency due to mutations in SLC25A26.</title>
        <authorList>
            <person name="Kishita Y."/>
            <person name="Pajak A."/>
            <person name="Bolar N.A."/>
            <person name="Marobbio C.M."/>
            <person name="Maffezzini C."/>
            <person name="Miniero D.V."/>
            <person name="Monne M."/>
            <person name="Kohda M."/>
            <person name="Stranneheim H."/>
            <person name="Murayama K."/>
            <person name="Naess K."/>
            <person name="Lesko N."/>
            <person name="Bruhn H."/>
            <person name="Mourier A."/>
            <person name="Wibom R."/>
            <person name="Nennesmo I."/>
            <person name="Jespers A."/>
            <person name="Govaert P."/>
            <person name="Ohtake A."/>
            <person name="Van Laer L."/>
            <person name="Loeys B.L."/>
            <person name="Freyer C."/>
            <person name="Palmieri F."/>
            <person name="Wredenberg A."/>
            <person name="Okazaki Y."/>
            <person name="Wedell A."/>
        </authorList>
    </citation>
    <scope>INVOLVEMENT IN COXPD28</scope>
    <scope>VARIANTS COXPD28 VAL-102; GLY-148 AND LEU-199</scope>
    <scope>CHARACTERIZATION OF VARIANTS COXPD28 VAL-102; GLY-148 AND LEU-199</scope>
    <scope>FUNCTION</scope>
    <scope>TRANSPORTER ACTIVITY</scope>
    <scope>SUBCELLULAR LOCATION</scope>
</reference>
<reference key="7">
    <citation type="journal article" date="2022" name="Hum. Mol. Genet.">
        <title>Pathogenic SLC25A26 variants impair SAH transport activity causing mitochondrial disease.</title>
        <authorList>
            <person name="Schober F.A."/>
            <person name="Tang J.X."/>
            <person name="Sergeant K."/>
            <person name="Moedas M.F."/>
            <person name="Zierz C.M."/>
            <person name="Moore D."/>
            <person name="Smith C."/>
            <person name="Lewis D."/>
            <person name="Guha N."/>
            <person name="Hopton S."/>
            <person name="Falkous G."/>
            <person name="Lam A."/>
            <person name="Pyle A."/>
            <person name="Poulton J."/>
            <person name="Gorman G.S."/>
            <person name="Taylor R.W."/>
            <person name="Freyer C."/>
            <person name="Wredenberg A."/>
        </authorList>
    </citation>
    <scope>VARIANTS COXPD28 GLY-135 AND GLN-142</scope>
    <scope>CHARACTERIZATION OF VARIANTS COXPD28 GLY-135 AND GLN-142</scope>
    <scope>FUNCTION</scope>
    <scope>TRANSPORTER ACTIVITY</scope>
</reference>
<evidence type="ECO:0000255" key="1"/>
<evidence type="ECO:0000269" key="2">
    <source>
    </source>
</evidence>
<evidence type="ECO:0000269" key="3">
    <source>
    </source>
</evidence>
<evidence type="ECO:0000269" key="4">
    <source>
    </source>
</evidence>
<evidence type="ECO:0000269" key="5">
    <source>
    </source>
</evidence>
<evidence type="ECO:0000269" key="6">
    <source ref="3"/>
</evidence>
<evidence type="ECO:0000303" key="7">
    <source>
    </source>
</evidence>
<evidence type="ECO:0000303" key="8">
    <source>
    </source>
</evidence>
<evidence type="ECO:0000303" key="9">
    <source>
    </source>
</evidence>
<evidence type="ECO:0000305" key="10"/>
<evidence type="ECO:0000305" key="11">
    <source>
    </source>
</evidence>
<evidence type="ECO:0000305" key="12">
    <source>
    </source>
</evidence>
<evidence type="ECO:0000312" key="13">
    <source>
        <dbReference type="HGNC" id="HGNC:20661"/>
    </source>
</evidence>
<proteinExistence type="evidence at protein level"/>
<name>SAMC_HUMAN</name>
<accession>Q70HW3</accession>
<accession>A8K758</accession>
<accession>B3KRZ7</accession>
<accession>F8WAB8</accession>
<accession>Q7Z786</accession>
<accession>Q96E68</accession>
<organism>
    <name type="scientific">Homo sapiens</name>
    <name type="common">Human</name>
    <dbReference type="NCBI Taxonomy" id="9606"/>
    <lineage>
        <taxon>Eukaryota</taxon>
        <taxon>Metazoa</taxon>
        <taxon>Chordata</taxon>
        <taxon>Craniata</taxon>
        <taxon>Vertebrata</taxon>
        <taxon>Euteleostomi</taxon>
        <taxon>Mammalia</taxon>
        <taxon>Eutheria</taxon>
        <taxon>Euarchontoglires</taxon>
        <taxon>Primates</taxon>
        <taxon>Haplorrhini</taxon>
        <taxon>Catarrhini</taxon>
        <taxon>Hominidae</taxon>
        <taxon>Homo</taxon>
    </lineage>
</organism>
<dbReference type="EMBL" id="AJ580932">
    <property type="protein sequence ID" value="CAE45652.1"/>
    <property type="molecule type" value="mRNA"/>
</dbReference>
<dbReference type="EMBL" id="AK092495">
    <property type="protein sequence ID" value="BAG52559.1"/>
    <property type="molecule type" value="mRNA"/>
</dbReference>
<dbReference type="EMBL" id="AK096876">
    <property type="protein sequence ID" value="BAG53388.1"/>
    <property type="molecule type" value="mRNA"/>
</dbReference>
<dbReference type="EMBL" id="AK291873">
    <property type="protein sequence ID" value="BAF84562.1"/>
    <property type="molecule type" value="mRNA"/>
</dbReference>
<dbReference type="EMBL" id="AC145425">
    <property type="status" value="NOT_ANNOTATED_CDS"/>
    <property type="molecule type" value="Genomic_DNA"/>
</dbReference>
<dbReference type="EMBL" id="AC170165">
    <property type="status" value="NOT_ANNOTATED_CDS"/>
    <property type="molecule type" value="Genomic_DNA"/>
</dbReference>
<dbReference type="EMBL" id="AC092034">
    <property type="status" value="NOT_ANNOTATED_CDS"/>
    <property type="molecule type" value="Genomic_DNA"/>
</dbReference>
<dbReference type="EMBL" id="AC170801">
    <property type="status" value="NOT_ANNOTATED_CDS"/>
    <property type="molecule type" value="Genomic_DNA"/>
</dbReference>
<dbReference type="EMBL" id="AC235952">
    <property type="status" value="NOT_ANNOTATED_CDS"/>
    <property type="molecule type" value="Genomic_DNA"/>
</dbReference>
<dbReference type="EMBL" id="AEKP01024816">
    <property type="status" value="NOT_ANNOTATED_CDS"/>
    <property type="molecule type" value="Genomic_DNA"/>
</dbReference>
<dbReference type="EMBL" id="CH471055">
    <property type="protein sequence ID" value="EAW65449.1"/>
    <property type="molecule type" value="Genomic_DNA"/>
</dbReference>
<dbReference type="EMBL" id="CH471055">
    <property type="protein sequence ID" value="EAW65451.1"/>
    <property type="molecule type" value="Genomic_DNA"/>
</dbReference>
<dbReference type="EMBL" id="BC003399">
    <property type="status" value="NOT_ANNOTATED_CDS"/>
    <property type="molecule type" value="mRNA"/>
</dbReference>
<dbReference type="EMBL" id="BC012852">
    <property type="protein sequence ID" value="AAH12852.2"/>
    <property type="molecule type" value="mRNA"/>
</dbReference>
<dbReference type="CCDS" id="CCDS2905.2">
    <molecule id="Q70HW3-1"/>
</dbReference>
<dbReference type="CCDS" id="CCDS54604.1">
    <molecule id="Q70HW3-2"/>
</dbReference>
<dbReference type="RefSeq" id="NP_001158268.1">
    <molecule id="Q70HW3-2"/>
    <property type="nucleotide sequence ID" value="NM_001164796.1"/>
</dbReference>
<dbReference type="RefSeq" id="NP_001337922.1">
    <molecule id="Q70HW3-2"/>
    <property type="nucleotide sequence ID" value="NM_001350993.1"/>
</dbReference>
<dbReference type="RefSeq" id="NP_001366139.1">
    <molecule id="Q70HW3-1"/>
    <property type="nucleotide sequence ID" value="NM_001379210.1"/>
</dbReference>
<dbReference type="RefSeq" id="NP_001387640.1">
    <molecule id="Q70HW3-2"/>
    <property type="nucleotide sequence ID" value="NM_001400711.1"/>
</dbReference>
<dbReference type="RefSeq" id="NP_775742.4">
    <molecule id="Q70HW3-1"/>
    <property type="nucleotide sequence ID" value="NM_173471.3"/>
</dbReference>
<dbReference type="RefSeq" id="XP_011531629.1">
    <property type="nucleotide sequence ID" value="XM_011533327.2"/>
</dbReference>
<dbReference type="SMR" id="Q70HW3"/>
<dbReference type="BioGRID" id="125423">
    <property type="interactions" value="9"/>
</dbReference>
<dbReference type="FunCoup" id="Q70HW3">
    <property type="interactions" value="1696"/>
</dbReference>
<dbReference type="IntAct" id="Q70HW3">
    <property type="interactions" value="2"/>
</dbReference>
<dbReference type="STRING" id="9606.ENSP00000346955"/>
<dbReference type="TCDB" id="2.A.29.18.3">
    <property type="family name" value="the mitochondrial carrier (mc) family"/>
</dbReference>
<dbReference type="iPTMnet" id="Q70HW3"/>
<dbReference type="PhosphoSitePlus" id="Q70HW3"/>
<dbReference type="BioMuta" id="SLC25A26"/>
<dbReference type="DMDM" id="74749739"/>
<dbReference type="jPOST" id="Q70HW3"/>
<dbReference type="MassIVE" id="Q70HW3"/>
<dbReference type="PaxDb" id="9606-ENSP00000346955"/>
<dbReference type="PeptideAtlas" id="Q70HW3"/>
<dbReference type="ProteomicsDB" id="30470"/>
<dbReference type="ProteomicsDB" id="68552">
    <molecule id="Q70HW3-1"/>
</dbReference>
<dbReference type="ProteomicsDB" id="68553">
    <molecule id="Q70HW3-2"/>
</dbReference>
<dbReference type="ProteomicsDB" id="68554">
    <molecule id="Q70HW3-3"/>
</dbReference>
<dbReference type="Pumba" id="Q70HW3"/>
<dbReference type="Antibodypedia" id="15419">
    <property type="antibodies" value="102 antibodies from 19 providers"/>
</dbReference>
<dbReference type="DNASU" id="115286"/>
<dbReference type="Ensembl" id="ENST00000336733.10">
    <molecule id="Q70HW3-2"/>
    <property type="protein sequence ID" value="ENSP00000336801.5"/>
    <property type="gene ID" value="ENSG00000144741.19"/>
</dbReference>
<dbReference type="Ensembl" id="ENST00000354883.11">
    <molecule id="Q70HW3-1"/>
    <property type="protein sequence ID" value="ENSP00000346955.6"/>
    <property type="gene ID" value="ENSG00000144741.19"/>
</dbReference>
<dbReference type="Ensembl" id="ENST00000632575.1">
    <molecule id="Q70HW3-2"/>
    <property type="protein sequence ID" value="ENSP00000488865.1"/>
    <property type="gene ID" value="ENSG00000282739.1"/>
</dbReference>
<dbReference type="Ensembl" id="ENST00000633701.1">
    <molecule id="Q70HW3-1"/>
    <property type="protein sequence ID" value="ENSP00000488659.1"/>
    <property type="gene ID" value="ENSG00000282739.1"/>
</dbReference>
<dbReference type="Ensembl" id="ENST00000676754.1">
    <molecule id="Q70HW3-1"/>
    <property type="protein sequence ID" value="ENSP00000504323.1"/>
    <property type="gene ID" value="ENSG00000144741.19"/>
</dbReference>
<dbReference type="Ensembl" id="ENST00000686511.1">
    <molecule id="Q70HW3-2"/>
    <property type="protein sequence ID" value="ENSP00000509933.1"/>
    <property type="gene ID" value="ENSG00000144741.19"/>
</dbReference>
<dbReference type="Ensembl" id="ENST00000691461.1">
    <molecule id="Q70HW3-2"/>
    <property type="protein sequence ID" value="ENSP00000510022.1"/>
    <property type="gene ID" value="ENSG00000144741.19"/>
</dbReference>
<dbReference type="GeneID" id="115286"/>
<dbReference type="KEGG" id="hsa:115286"/>
<dbReference type="MANE-Select" id="ENST00000354883.11">
    <property type="protein sequence ID" value="ENSP00000346955.6"/>
    <property type="RefSeq nucleotide sequence ID" value="NM_001379210.1"/>
    <property type="RefSeq protein sequence ID" value="NP_001366139.1"/>
</dbReference>
<dbReference type="UCSC" id="uc011bfq.2">
    <property type="organism name" value="human"/>
</dbReference>
<dbReference type="UCSC" id="uc011bfs.3">
    <molecule id="Q70HW3-1"/>
    <property type="organism name" value="human"/>
</dbReference>
<dbReference type="AGR" id="HGNC:20661"/>
<dbReference type="CTD" id="115286"/>
<dbReference type="DisGeNET" id="115286"/>
<dbReference type="GeneCards" id="SLC25A26"/>
<dbReference type="HGNC" id="HGNC:20661">
    <property type="gene designation" value="SLC25A26"/>
</dbReference>
<dbReference type="HPA" id="ENSG00000144741">
    <property type="expression patterns" value="Low tissue specificity"/>
</dbReference>
<dbReference type="MalaCards" id="SLC25A26"/>
<dbReference type="MIM" id="611037">
    <property type="type" value="gene"/>
</dbReference>
<dbReference type="MIM" id="616794">
    <property type="type" value="phenotype"/>
</dbReference>
<dbReference type="neXtProt" id="NX_Q70HW3"/>
<dbReference type="OpenTargets" id="ENSG00000144741"/>
<dbReference type="Orphanet" id="466784">
    <property type="disease" value="Neonatal severe cardiopulmonary failure due to mitochondrial methylation defect"/>
</dbReference>
<dbReference type="PharmGKB" id="PA134987831"/>
<dbReference type="VEuPathDB" id="HostDB:ENSG00000144741"/>
<dbReference type="eggNOG" id="KOG0768">
    <property type="taxonomic scope" value="Eukaryota"/>
</dbReference>
<dbReference type="GeneTree" id="ENSGT00550000074950"/>
<dbReference type="InParanoid" id="Q70HW3"/>
<dbReference type="OMA" id="IGPRTMW"/>
<dbReference type="OrthoDB" id="276989at2759"/>
<dbReference type="PAN-GO" id="Q70HW3">
    <property type="GO annotations" value="2 GO annotations based on evolutionary models"/>
</dbReference>
<dbReference type="PhylomeDB" id="Q70HW3"/>
<dbReference type="TreeFam" id="TF313186"/>
<dbReference type="PathwayCommons" id="Q70HW3"/>
<dbReference type="Reactome" id="R-HSA-425393">
    <property type="pathway name" value="Transport of inorganic cations/anions and amino acids/oligopeptides"/>
</dbReference>
<dbReference type="SignaLink" id="Q70HW3"/>
<dbReference type="BioGRID-ORCS" id="115286">
    <property type="hits" value="373 hits in 1179 CRISPR screens"/>
</dbReference>
<dbReference type="ChiTaRS" id="SLC25A26">
    <property type="organism name" value="human"/>
</dbReference>
<dbReference type="GenomeRNAi" id="115286"/>
<dbReference type="Pharos" id="Q70HW3">
    <property type="development level" value="Tbio"/>
</dbReference>
<dbReference type="PRO" id="PR:Q70HW3"/>
<dbReference type="Proteomes" id="UP000005640">
    <property type="component" value="Chromosome 3"/>
</dbReference>
<dbReference type="RNAct" id="Q70HW3">
    <property type="molecule type" value="protein"/>
</dbReference>
<dbReference type="Bgee" id="ENSG00000144741">
    <property type="expression patterns" value="Expressed in gastrocnemius and 99 other cell types or tissues"/>
</dbReference>
<dbReference type="ExpressionAtlas" id="Q70HW3">
    <property type="expression patterns" value="baseline and differential"/>
</dbReference>
<dbReference type="GO" id="GO:0005743">
    <property type="term" value="C:mitochondrial inner membrane"/>
    <property type="evidence" value="ECO:0000314"/>
    <property type="project" value="UniProtKB"/>
</dbReference>
<dbReference type="GO" id="GO:0005739">
    <property type="term" value="C:mitochondrion"/>
    <property type="evidence" value="ECO:0000314"/>
    <property type="project" value="HPA"/>
</dbReference>
<dbReference type="GO" id="GO:0000095">
    <property type="term" value="F:S-adenosyl-L-methionine transmembrane transporter activity"/>
    <property type="evidence" value="ECO:0000315"/>
    <property type="project" value="UniProtKB"/>
</dbReference>
<dbReference type="GO" id="GO:0180003">
    <property type="term" value="F:S-adenosyl-L-methionine:S-adenosyl-L-homocysteine antiporter activity"/>
    <property type="evidence" value="ECO:0000315"/>
    <property type="project" value="UniProtKB"/>
</dbReference>
<dbReference type="GO" id="GO:0043414">
    <property type="term" value="P:macromolecule methylation"/>
    <property type="evidence" value="ECO:0000315"/>
    <property type="project" value="UniProtKB"/>
</dbReference>
<dbReference type="GO" id="GO:1990543">
    <property type="term" value="P:mitochondrial S-adenosyl-L-methionine transmembrane transport"/>
    <property type="evidence" value="ECO:0000315"/>
    <property type="project" value="UniProtKB"/>
</dbReference>
<dbReference type="GO" id="GO:0006811">
    <property type="term" value="P:monoatomic ion transport"/>
    <property type="evidence" value="ECO:0000304"/>
    <property type="project" value="Reactome"/>
</dbReference>
<dbReference type="GO" id="GO:0015805">
    <property type="term" value="P:S-adenosyl-L-methionine transport"/>
    <property type="evidence" value="ECO:0000315"/>
    <property type="project" value="UniProtKB"/>
</dbReference>
<dbReference type="FunFam" id="1.50.40.10:FF:000018">
    <property type="entry name" value="S-adenosylmethionine mitochondrial carrier protein-like"/>
    <property type="match status" value="1"/>
</dbReference>
<dbReference type="Gene3D" id="1.50.40.10">
    <property type="entry name" value="Mitochondrial carrier domain"/>
    <property type="match status" value="1"/>
</dbReference>
<dbReference type="InterPro" id="IPR018108">
    <property type="entry name" value="Mitochondrial_sb/sol_carrier"/>
</dbReference>
<dbReference type="InterPro" id="IPR023395">
    <property type="entry name" value="Mt_carrier_dom_sf"/>
</dbReference>
<dbReference type="PANTHER" id="PTHR45667">
    <property type="entry name" value="S-ADENOSYLMETHIONINE MITOCHONDRIAL CARRIER PROTEIN"/>
    <property type="match status" value="1"/>
</dbReference>
<dbReference type="Pfam" id="PF00153">
    <property type="entry name" value="Mito_carr"/>
    <property type="match status" value="4"/>
</dbReference>
<dbReference type="SUPFAM" id="SSF103506">
    <property type="entry name" value="Mitochondrial carrier"/>
    <property type="match status" value="1"/>
</dbReference>
<dbReference type="PROSITE" id="PS50920">
    <property type="entry name" value="SOLCAR"/>
    <property type="match status" value="3"/>
</dbReference>
<comment type="function">
    <text evidence="2 4 5">Mitochondrial S-adenosyl-L-methionine/S-adenosyl-L-homocysteine antiporter. Mediates the exchange of cytosolic S-adenosyl-L-methionine, the predominant methyl-group donor for macromolecule methylation processes, for mitochondrial S-adenosylhomocysteine(SAH), a by-product of methylation reactions.</text>
</comment>
<comment type="catalytic activity">
    <reaction evidence="2 4 5">
        <text>S-adenosyl-L-homocysteine(out) + S-adenosyl-L-methionine(in) = S-adenosyl-L-homocysteine(in) + S-adenosyl-L-methionine(out)</text>
        <dbReference type="Rhea" id="RHEA:75479"/>
        <dbReference type="ChEBI" id="CHEBI:57856"/>
        <dbReference type="ChEBI" id="CHEBI:59789"/>
    </reaction>
</comment>
<comment type="activity regulation">
    <text evidence="2">Strongly inhibited by tannic acid and Bromocresol Purple.</text>
</comment>
<comment type="biophysicochemical properties">
    <kinetics>
        <KM evidence="2">23 uM for S-adenosyl-L-methionine (at 25 degrees Celsius)</KM>
    </kinetics>
</comment>
<comment type="subcellular location">
    <subcellularLocation>
        <location evidence="11 12">Mitochondrion inner membrane</location>
        <topology evidence="1">Multi-pass membrane protein</topology>
    </subcellularLocation>
</comment>
<comment type="alternative products">
    <event type="alternative splicing"/>
    <isoform>
        <id>Q70HW3-1</id>
        <name>1</name>
        <sequence type="displayed"/>
    </isoform>
    <isoform>
        <id>Q70HW3-2</id>
        <name>2</name>
        <sequence type="described" ref="VSP_031062"/>
    </isoform>
    <isoform>
        <id>Q70HW3-3</id>
        <name>3</name>
        <sequence type="described" ref="VSP_031062 VSP_031063 VSP_031064"/>
    </isoform>
</comment>
<comment type="tissue specificity">
    <text evidence="2">Widely expressed. Highly expressed in testis, with moderate expression in brain, heart, kidney, lung, skeletal muscle, pancreas, small intestine and liver, and low expression in spleen.</text>
</comment>
<comment type="disease" evidence="4 5">
    <disease id="DI-04643">
        <name>Combined oxidative phosphorylation deficiency 28</name>
        <acronym>COXPD28</acronym>
        <description>An autosomal recessive mitochondrial disorder characterized by decreased activities of respiratory chain enzymes, and variable clinical manifestations. Clinical features include episodic metabolic decompensation beginning in infancy, mild muscle weakness, cardiorespiratory insufficiency, developmental delay, or even death.</description>
        <dbReference type="MIM" id="616794"/>
    </disease>
    <text>The disease is caused by variants affecting the gene represented in this entry.</text>
</comment>
<comment type="similarity">
    <text evidence="10">Belongs to the mitochondrial carrier (TC 2.A.29) family.</text>
</comment>
<gene>
    <name evidence="13" type="primary">SLC25A26</name>
    <name evidence="7" type="synonym">SAMC</name>
</gene>
<sequence length="274" mass="29354">MDRPGFVAALVAGGVAGVSVDLILFPLDTIKTRLQSPQGFSKAGGFHGIYAGVPSAAIGSFPNAAAFFITYEYVKWFLHADSSSYLTPMKHMLAASAGEVVACLIRVPSEVVKQRAQVSASTRTFQIFSNILYEEGIQGLYRGYKSTVLREIPFSLVQFPLWESLKALWSWRQDHVVDSWQSAVCGAFAGGFAAAVTTPLDVAKTRITLAKAGSSTADGNVLSVLHGVWRSQGLAGLFAGVFPRMAAISLGGFIFLGAYDRTHSLLLEVGRKSP</sequence>
<keyword id="KW-0025">Alternative splicing</keyword>
<keyword id="KW-0050">Antiport</keyword>
<keyword id="KW-0225">Disease variant</keyword>
<keyword id="KW-0472">Membrane</keyword>
<keyword id="KW-0496">Mitochondrion</keyword>
<keyword id="KW-0999">Mitochondrion inner membrane</keyword>
<keyword id="KW-1274">Primary mitochondrial disease</keyword>
<keyword id="KW-1267">Proteomics identification</keyword>
<keyword id="KW-1185">Reference proteome</keyword>
<keyword id="KW-0677">Repeat</keyword>
<keyword id="KW-0949">S-adenosyl-L-methionine</keyword>
<keyword id="KW-0812">Transmembrane</keyword>
<keyword id="KW-1133">Transmembrane helix</keyword>
<keyword id="KW-0813">Transport</keyword>